<accession>Q9SXA6</accession>
<accession>Q9ZR89</accession>
<dbReference type="EC" id="3.1.30.1" evidence="12"/>
<dbReference type="EMBL" id="U90264">
    <property type="protein sequence ID" value="AAD00693.1"/>
    <property type="molecule type" value="Genomic_DNA"/>
</dbReference>
<dbReference type="EMBL" id="AC007259">
    <property type="protein sequence ID" value="AAD49996.1"/>
    <property type="molecule type" value="Genomic_DNA"/>
</dbReference>
<dbReference type="EMBL" id="CP002684">
    <property type="protein sequence ID" value="AEE28697.1"/>
    <property type="molecule type" value="Genomic_DNA"/>
</dbReference>
<dbReference type="EMBL" id="AY040016">
    <property type="protein sequence ID" value="AAK64173.1"/>
    <property type="molecule type" value="mRNA"/>
</dbReference>
<dbReference type="EMBL" id="AY079368">
    <property type="protein sequence ID" value="AAL85099.1"/>
    <property type="molecule type" value="mRNA"/>
</dbReference>
<dbReference type="EMBL" id="AY088393">
    <property type="protein sequence ID" value="AAM65931.1"/>
    <property type="molecule type" value="mRNA"/>
</dbReference>
<dbReference type="PIR" id="H86245">
    <property type="entry name" value="H86245"/>
</dbReference>
<dbReference type="RefSeq" id="NP_172585.1">
    <property type="nucleotide sequence ID" value="NM_100991.2"/>
</dbReference>
<dbReference type="SMR" id="Q9SXA6"/>
<dbReference type="FunCoup" id="Q9SXA6">
    <property type="interactions" value="90"/>
</dbReference>
<dbReference type="STRING" id="3702.Q9SXA6"/>
<dbReference type="GlyCosmos" id="Q9SXA6">
    <property type="glycosylation" value="3 sites, No reported glycans"/>
</dbReference>
<dbReference type="GlyGen" id="Q9SXA6">
    <property type="glycosylation" value="3 sites"/>
</dbReference>
<dbReference type="PaxDb" id="3702-AT1G11190.1"/>
<dbReference type="ProteomicsDB" id="222714"/>
<dbReference type="EnsemblPlants" id="AT1G11190.1">
    <property type="protein sequence ID" value="AT1G11190.1"/>
    <property type="gene ID" value="AT1G11190"/>
</dbReference>
<dbReference type="GeneID" id="837660"/>
<dbReference type="Gramene" id="AT1G11190.1">
    <property type="protein sequence ID" value="AT1G11190.1"/>
    <property type="gene ID" value="AT1G11190"/>
</dbReference>
<dbReference type="KEGG" id="ath:AT1G11190"/>
<dbReference type="Araport" id="AT1G11190"/>
<dbReference type="TAIR" id="AT1G11190">
    <property type="gene designation" value="BFN1"/>
</dbReference>
<dbReference type="eggNOG" id="ENOG502QTPJ">
    <property type="taxonomic scope" value="Eukaryota"/>
</dbReference>
<dbReference type="HOGENOM" id="CLU_044365_3_0_1"/>
<dbReference type="InParanoid" id="Q9SXA6"/>
<dbReference type="OMA" id="GYRLANW"/>
<dbReference type="PhylomeDB" id="Q9SXA6"/>
<dbReference type="BRENDA" id="3.1.30.2">
    <property type="organism ID" value="399"/>
</dbReference>
<dbReference type="PRO" id="PR:Q9SXA6"/>
<dbReference type="Proteomes" id="UP000006548">
    <property type="component" value="Chromosome 1"/>
</dbReference>
<dbReference type="ExpressionAtlas" id="Q9SXA6">
    <property type="expression patterns" value="baseline and differential"/>
</dbReference>
<dbReference type="GO" id="GO:1990238">
    <property type="term" value="F:double-stranded DNA endonuclease activity"/>
    <property type="evidence" value="ECO:0000314"/>
    <property type="project" value="UniProtKB"/>
</dbReference>
<dbReference type="GO" id="GO:0004519">
    <property type="term" value="F:endonuclease activity"/>
    <property type="evidence" value="ECO:0000314"/>
    <property type="project" value="UniProtKB"/>
</dbReference>
<dbReference type="GO" id="GO:0046872">
    <property type="term" value="F:metal ion binding"/>
    <property type="evidence" value="ECO:0007669"/>
    <property type="project" value="UniProtKB-KW"/>
</dbReference>
<dbReference type="GO" id="GO:0003676">
    <property type="term" value="F:nucleic acid binding"/>
    <property type="evidence" value="ECO:0007669"/>
    <property type="project" value="InterPro"/>
</dbReference>
<dbReference type="GO" id="GO:0004521">
    <property type="term" value="F:RNA endonuclease activity"/>
    <property type="evidence" value="ECO:0000314"/>
    <property type="project" value="UniProtKB"/>
</dbReference>
<dbReference type="GO" id="GO:0016891">
    <property type="term" value="F:RNA endonuclease activity, producing 5'-phosphomonoesters"/>
    <property type="evidence" value="ECO:0000314"/>
    <property type="project" value="TAIR"/>
</dbReference>
<dbReference type="GO" id="GO:0000014">
    <property type="term" value="F:single-stranded DNA endodeoxyribonuclease activity"/>
    <property type="evidence" value="ECO:0000314"/>
    <property type="project" value="UniProtKB"/>
</dbReference>
<dbReference type="GO" id="GO:0043765">
    <property type="term" value="F:T/G mismatch-specific endonuclease activity"/>
    <property type="evidence" value="ECO:0000314"/>
    <property type="project" value="TAIR"/>
</dbReference>
<dbReference type="GO" id="GO:0006308">
    <property type="term" value="P:DNA catabolic process"/>
    <property type="evidence" value="ECO:0000314"/>
    <property type="project" value="UniProtKB"/>
</dbReference>
<dbReference type="GO" id="GO:0080187">
    <property type="term" value="P:floral organ senescence"/>
    <property type="evidence" value="ECO:0000270"/>
    <property type="project" value="UniProtKB"/>
</dbReference>
<dbReference type="GO" id="GO:0010150">
    <property type="term" value="P:leaf senescence"/>
    <property type="evidence" value="ECO:0000270"/>
    <property type="project" value="UniProtKB"/>
</dbReference>
<dbReference type="CDD" id="cd11010">
    <property type="entry name" value="S1-P1_nuclease"/>
    <property type="match status" value="1"/>
</dbReference>
<dbReference type="FunFam" id="1.10.575.10:FF:000002">
    <property type="entry name" value="Endonuclease 2"/>
    <property type="match status" value="1"/>
</dbReference>
<dbReference type="Gene3D" id="1.10.575.10">
    <property type="entry name" value="P1 Nuclease"/>
    <property type="match status" value="1"/>
</dbReference>
<dbReference type="InterPro" id="IPR008947">
    <property type="entry name" value="PLipase_C/P1_nuclease_dom_sf"/>
</dbReference>
<dbReference type="InterPro" id="IPR003154">
    <property type="entry name" value="S1/P1nuclease"/>
</dbReference>
<dbReference type="PANTHER" id="PTHR33146:SF14">
    <property type="entry name" value="ENDONUCLEASE 1"/>
    <property type="match status" value="1"/>
</dbReference>
<dbReference type="PANTHER" id="PTHR33146">
    <property type="entry name" value="ENDONUCLEASE 4"/>
    <property type="match status" value="1"/>
</dbReference>
<dbReference type="Pfam" id="PF02265">
    <property type="entry name" value="S1-P1_nuclease"/>
    <property type="match status" value="1"/>
</dbReference>
<dbReference type="SUPFAM" id="SSF48537">
    <property type="entry name" value="Phospholipase C/P1 nuclease"/>
    <property type="match status" value="1"/>
</dbReference>
<comment type="function">
    <text evidence="7 8 10 12">Endonuclease that can use RNA, single-stranded and double-stranded DNA as substrates (PubMed:23620482). Hydrolyzes single-stranded DNA and RNA without apparent specificity for bases during senescence. Endonuclease that recognizes and cleaves all types of mismatches with high efficiency, including heteroduplex double-stranded DNA. Maybe involved in programmed cell death (PCD) and senescence.</text>
</comment>
<comment type="catalytic activity">
    <reaction evidence="12">
        <text>Endonucleolytic cleavage to 5'-phosphomononucleotide and 5'-phosphooligonucleotide end-products.</text>
        <dbReference type="EC" id="3.1.30.1"/>
    </reaction>
</comment>
<comment type="cofactor">
    <cofactor evidence="12">
        <name>Mn(2+)</name>
        <dbReference type="ChEBI" id="CHEBI:29035"/>
    </cofactor>
    <cofactor evidence="12">
        <name>Ca(2+)</name>
        <dbReference type="ChEBI" id="CHEBI:29108"/>
    </cofactor>
    <text evidence="12">Binds 3 divalent metal cations (PubMed:23620482). Uses Ca(2+) ions with ssDNA as substrate (PubMed:23620482). Can also use Mn(2+) with lower efficiency with ssDNA and dsDNA as substrates (PubMed:23620482).</text>
</comment>
<comment type="biophysicochemical properties">
    <phDependence>
        <text evidence="12">Optimum pH is 8 with RNA, ssDNA and dsDNA as substrates.</text>
    </phDependence>
</comment>
<comment type="subunit">
    <text evidence="1">Monomer.</text>
</comment>
<comment type="tissue specificity">
    <text evidence="7 10 11">Mostly expressed in flowers and during leaf and stem senescence, and, to a lower extent, detectable at low levels in roots, leaves, and stems. Particularly expressed in senescing tissues in a NAC92/ORE1-dependent manner.</text>
</comment>
<comment type="developmental stage">
    <text evidence="10 11">Present in the margins and tips of the oldest leaves, senescent leaves, differentiating xylem and at the abscission zone of flowers. In flowers, expressed in developing anthers and seeds. Accumulates in stigma, mature anthers, sepals, and petals of older/fully opened flowers. Also present in floral organs after fertilization. In mature siliques, observed in abscission zones and in the distal portion of the valve margins.</text>
</comment>
<comment type="induction">
    <text evidence="11">Directly induced by NAC92 during senescence onset.</text>
</comment>
<comment type="biotechnology">
    <text evidence="8 9">ENDO1 is used to detect mutations generated by ethyl methan sulfonate (EMS) to produce a TILLING (targeting-induced local lesions in genomes) platform (PubMed:17651368, PubMed:18433472).</text>
</comment>
<comment type="similarity">
    <text evidence="15">Belongs to the nuclease type I family.</text>
</comment>
<keyword id="KW-0106">Calcium</keyword>
<keyword id="KW-1015">Disulfide bond</keyword>
<keyword id="KW-0255">Endonuclease</keyword>
<keyword id="KW-0325">Glycoprotein</keyword>
<keyword id="KW-0378">Hydrolase</keyword>
<keyword id="KW-0464">Manganese</keyword>
<keyword id="KW-0479">Metal-binding</keyword>
<keyword id="KW-0540">Nuclease</keyword>
<keyword id="KW-1185">Reference proteome</keyword>
<keyword id="KW-0732">Signal</keyword>
<reference key="1">
    <citation type="journal article" date="2000" name="Plant Physiol.">
        <title>Identification of BFN1, a bifunctional nuclease induced during leaf and stem senescence in Arabidopsis.</title>
        <authorList>
            <person name="Perez-Amador M.A."/>
            <person name="Abler M.L."/>
            <person name="De Rocher E.J."/>
            <person name="Thompson D.M."/>
            <person name="van Hoof A."/>
            <person name="LeBrasseur N.D."/>
            <person name="Lers A."/>
            <person name="Green P.J."/>
        </authorList>
    </citation>
    <scope>NUCLEOTIDE SEQUENCE [GENOMIC DNA]</scope>
    <scope>FUNCTION</scope>
    <scope>TISSUE SPECIFICITY</scope>
    <source>
        <strain>cv. Columbia</strain>
    </source>
</reference>
<reference key="2">
    <citation type="journal article" date="2000" name="Nature">
        <title>Sequence and analysis of chromosome 1 of the plant Arabidopsis thaliana.</title>
        <authorList>
            <person name="Theologis A."/>
            <person name="Ecker J.R."/>
            <person name="Palm C.J."/>
            <person name="Federspiel N.A."/>
            <person name="Kaul S."/>
            <person name="White O."/>
            <person name="Alonso J."/>
            <person name="Altafi H."/>
            <person name="Araujo R."/>
            <person name="Bowman C.L."/>
            <person name="Brooks S.Y."/>
            <person name="Buehler E."/>
            <person name="Chan A."/>
            <person name="Chao Q."/>
            <person name="Chen H."/>
            <person name="Cheuk R.F."/>
            <person name="Chin C.W."/>
            <person name="Chung M.K."/>
            <person name="Conn L."/>
            <person name="Conway A.B."/>
            <person name="Conway A.R."/>
            <person name="Creasy T.H."/>
            <person name="Dewar K."/>
            <person name="Dunn P."/>
            <person name="Etgu P."/>
            <person name="Feldblyum T.V."/>
            <person name="Feng J.-D."/>
            <person name="Fong B."/>
            <person name="Fujii C.Y."/>
            <person name="Gill J.E."/>
            <person name="Goldsmith A.D."/>
            <person name="Haas B."/>
            <person name="Hansen N.F."/>
            <person name="Hughes B."/>
            <person name="Huizar L."/>
            <person name="Hunter J.L."/>
            <person name="Jenkins J."/>
            <person name="Johnson-Hopson C."/>
            <person name="Khan S."/>
            <person name="Khaykin E."/>
            <person name="Kim C.J."/>
            <person name="Koo H.L."/>
            <person name="Kremenetskaia I."/>
            <person name="Kurtz D.B."/>
            <person name="Kwan A."/>
            <person name="Lam B."/>
            <person name="Langin-Hooper S."/>
            <person name="Lee A."/>
            <person name="Lee J.M."/>
            <person name="Lenz C.A."/>
            <person name="Li J.H."/>
            <person name="Li Y.-P."/>
            <person name="Lin X."/>
            <person name="Liu S.X."/>
            <person name="Liu Z.A."/>
            <person name="Luros J.S."/>
            <person name="Maiti R."/>
            <person name="Marziali A."/>
            <person name="Militscher J."/>
            <person name="Miranda M."/>
            <person name="Nguyen M."/>
            <person name="Nierman W.C."/>
            <person name="Osborne B.I."/>
            <person name="Pai G."/>
            <person name="Peterson J."/>
            <person name="Pham P.K."/>
            <person name="Rizzo M."/>
            <person name="Rooney T."/>
            <person name="Rowley D."/>
            <person name="Sakano H."/>
            <person name="Salzberg S.L."/>
            <person name="Schwartz J.R."/>
            <person name="Shinn P."/>
            <person name="Southwick A.M."/>
            <person name="Sun H."/>
            <person name="Tallon L.J."/>
            <person name="Tambunga G."/>
            <person name="Toriumi M.J."/>
            <person name="Town C.D."/>
            <person name="Utterback T."/>
            <person name="Van Aken S."/>
            <person name="Vaysberg M."/>
            <person name="Vysotskaia V.S."/>
            <person name="Walker M."/>
            <person name="Wu D."/>
            <person name="Yu G."/>
            <person name="Fraser C.M."/>
            <person name="Venter J.C."/>
            <person name="Davis R.W."/>
        </authorList>
    </citation>
    <scope>NUCLEOTIDE SEQUENCE [LARGE SCALE GENOMIC DNA]</scope>
    <source>
        <strain>cv. Columbia</strain>
    </source>
</reference>
<reference key="3">
    <citation type="journal article" date="2017" name="Plant J.">
        <title>Araport11: a complete reannotation of the Arabidopsis thaliana reference genome.</title>
        <authorList>
            <person name="Cheng C.Y."/>
            <person name="Krishnakumar V."/>
            <person name="Chan A.P."/>
            <person name="Thibaud-Nissen F."/>
            <person name="Schobel S."/>
            <person name="Town C.D."/>
        </authorList>
    </citation>
    <scope>GENOME REANNOTATION</scope>
    <source>
        <strain>cv. Columbia</strain>
    </source>
</reference>
<reference key="4">
    <citation type="journal article" date="2003" name="Science">
        <title>Empirical analysis of transcriptional activity in the Arabidopsis genome.</title>
        <authorList>
            <person name="Yamada K."/>
            <person name="Lim J."/>
            <person name="Dale J.M."/>
            <person name="Chen H."/>
            <person name="Shinn P."/>
            <person name="Palm C.J."/>
            <person name="Southwick A.M."/>
            <person name="Wu H.C."/>
            <person name="Kim C.J."/>
            <person name="Nguyen M."/>
            <person name="Pham P.K."/>
            <person name="Cheuk R.F."/>
            <person name="Karlin-Newmann G."/>
            <person name="Liu S.X."/>
            <person name="Lam B."/>
            <person name="Sakano H."/>
            <person name="Wu T."/>
            <person name="Yu G."/>
            <person name="Miranda M."/>
            <person name="Quach H.L."/>
            <person name="Tripp M."/>
            <person name="Chang C.H."/>
            <person name="Lee J.M."/>
            <person name="Toriumi M.J."/>
            <person name="Chan M.M."/>
            <person name="Tang C.C."/>
            <person name="Onodera C.S."/>
            <person name="Deng J.M."/>
            <person name="Akiyama K."/>
            <person name="Ansari Y."/>
            <person name="Arakawa T."/>
            <person name="Banh J."/>
            <person name="Banno F."/>
            <person name="Bowser L."/>
            <person name="Brooks S.Y."/>
            <person name="Carninci P."/>
            <person name="Chao Q."/>
            <person name="Choy N."/>
            <person name="Enju A."/>
            <person name="Goldsmith A.D."/>
            <person name="Gurjal M."/>
            <person name="Hansen N.F."/>
            <person name="Hayashizaki Y."/>
            <person name="Johnson-Hopson C."/>
            <person name="Hsuan V.W."/>
            <person name="Iida K."/>
            <person name="Karnes M."/>
            <person name="Khan S."/>
            <person name="Koesema E."/>
            <person name="Ishida J."/>
            <person name="Jiang P.X."/>
            <person name="Jones T."/>
            <person name="Kawai J."/>
            <person name="Kamiya A."/>
            <person name="Meyers C."/>
            <person name="Nakajima M."/>
            <person name="Narusaka M."/>
            <person name="Seki M."/>
            <person name="Sakurai T."/>
            <person name="Satou M."/>
            <person name="Tamse R."/>
            <person name="Vaysberg M."/>
            <person name="Wallender E.K."/>
            <person name="Wong C."/>
            <person name="Yamamura Y."/>
            <person name="Yuan S."/>
            <person name="Shinozaki K."/>
            <person name="Davis R.W."/>
            <person name="Theologis A."/>
            <person name="Ecker J.R."/>
        </authorList>
    </citation>
    <scope>NUCLEOTIDE SEQUENCE [LARGE SCALE MRNA]</scope>
    <source>
        <strain>cv. Columbia</strain>
    </source>
</reference>
<reference key="5">
    <citation type="submission" date="2002-03" db="EMBL/GenBank/DDBJ databases">
        <title>Full-length cDNA from Arabidopsis thaliana.</title>
        <authorList>
            <person name="Brover V.V."/>
            <person name="Troukhan M.E."/>
            <person name="Alexandrov N.A."/>
            <person name="Lu Y.-P."/>
            <person name="Flavell R.B."/>
            <person name="Feldmann K.A."/>
        </authorList>
    </citation>
    <scope>NUCLEOTIDE SEQUENCE [LARGE SCALE MRNA]</scope>
</reference>
<reference key="6">
    <citation type="journal article" date="2007" name="Plant J.">
        <title>Characterization of Arabidopsis thaliana mismatch specific endonucleases: application to mutation discovery by TILLING in pea.</title>
        <authorList>
            <person name="Triques K."/>
            <person name="Sturbois B."/>
            <person name="Gallais S."/>
            <person name="Dalmais M."/>
            <person name="Chauvin S."/>
            <person name="Clepet C."/>
            <person name="Aubourg S."/>
            <person name="Rameau C."/>
            <person name="Caboche M."/>
            <person name="Bendahmane A."/>
        </authorList>
    </citation>
    <scope>FUNCTION</scope>
    <scope>BIOTECHNOLOGY</scope>
    <scope>GENE FAMILY</scope>
    <scope>NOMENCLATURE</scope>
</reference>
<reference key="7">
    <citation type="journal article" date="2008" name="BMC Mol. Biol.">
        <title>Mutation detection using ENDO1: application to disease diagnostics in humans and TILLING and Eco-TILLING in plants.</title>
        <authorList>
            <person name="Triques K."/>
            <person name="Piednoir E."/>
            <person name="Dalmais M."/>
            <person name="Schmidt J."/>
            <person name="Le Signor C."/>
            <person name="Sharkey M."/>
            <person name="Caboche M."/>
            <person name="Sturbois B."/>
            <person name="Bendahmane A."/>
        </authorList>
    </citation>
    <scope>BIOTECHNOLOGY</scope>
</reference>
<reference key="8">
    <citation type="journal article" date="2008" name="J. Exp. Bot.">
        <title>Expression analysis of the BFN1 nuclease gene promoter during senescence, abscission, and programmed cell death-related processes.</title>
        <authorList>
            <person name="Farage-Barhom S."/>
            <person name="Burd S."/>
            <person name="Sonego L."/>
            <person name="Perl-Treves R."/>
            <person name="Lers A."/>
        </authorList>
    </citation>
    <scope>FUNCTION</scope>
    <scope>TISSUE SPECIFICITY</scope>
    <scope>DEVELOPMENTAL STAGE</scope>
    <source>
        <strain>cv. Columbia</strain>
    </source>
</reference>
<reference key="9">
    <citation type="journal article" date="2013" name="Mol. Plant">
        <title>NAC transcription factor ORE1 and senescence-induced BIFUNCTIONAL NUCLEASE1 (BFN1) constitute a regulatory cascade in Arabidopsis.</title>
        <authorList>
            <person name="Matallana-Ramirez L.P."/>
            <person name="Rauf M."/>
            <person name="Farage-Barhom S."/>
            <person name="Dortay H."/>
            <person name="Xue G.-P."/>
            <person name="Droege-Laser W."/>
            <person name="Lers A."/>
            <person name="Balazadeh S."/>
            <person name="Mueller-Roeber B."/>
        </authorList>
    </citation>
    <scope>INDUCTION BY NAC92/ORE1</scope>
    <scope>TISSUE SPECIFICITY</scope>
    <scope>DEVELOPMENTAL STAGE</scope>
    <source>
        <strain>cv. Columbia</strain>
    </source>
</reference>
<reference key="10">
    <citation type="journal article" date="2013" name="Plant Cell Physiol.">
        <title>The plant s1-like nuclease family has evolved a highly diverse range of catalytic capabilities.</title>
        <authorList>
            <person name="Lesniewicz K."/>
            <person name="Karlowski W.M."/>
            <person name="Pienkowska J.R."/>
            <person name="Krzywkowski P."/>
            <person name="Poreba E."/>
        </authorList>
    </citation>
    <scope>FUNCTION</scope>
    <scope>MUTAGENESIS OF 287-MET--THR-305</scope>
    <scope>BIOPHYSICOCHEMICAL PROPERTIES</scope>
    <scope>CATALYTIC ACTIVITY</scope>
    <scope>COFACTOR</scope>
    <scope>PROTEOLYTIC CLEAVAGE</scope>
    <scope>GENE FAMILY</scope>
</reference>
<proteinExistence type="evidence at protein level"/>
<gene>
    <name evidence="14" type="primary">ENDO1</name>
    <name evidence="13" type="synonym">BFN1</name>
    <name evidence="16" type="ordered locus">At1g11190</name>
    <name evidence="17" type="ORF">T28P6.14</name>
</gene>
<sequence>MASAFRSSTRLILVLGILILCSVSSVRSWSKEGHILTCRIAQNLLEAGPAHVVENLLPDYVKGDLSALCVWPDQIRHWYKYRWTSHLHYIDTPDQACSYEYSRDCHDQHGLKDMCVDGAIQNFTSQLQHYGEGTSDRRYNMTEALLFLSHFMGDIHQPMHVGFTSDEGGNTIDLRWYKHKSNLHHVWDREIILTALKENYDKNLDLLQEDLEKNITNGLWHDDLSSWTECNDLIACPHKYASESIKLACKWGYKGVKSGETLSEEYFNTRLPIVMKRIVQGGVRLAMILNRVFSDDHAIAGVAAT</sequence>
<organism>
    <name type="scientific">Arabidopsis thaliana</name>
    <name type="common">Mouse-ear cress</name>
    <dbReference type="NCBI Taxonomy" id="3702"/>
    <lineage>
        <taxon>Eukaryota</taxon>
        <taxon>Viridiplantae</taxon>
        <taxon>Streptophyta</taxon>
        <taxon>Embryophyta</taxon>
        <taxon>Tracheophyta</taxon>
        <taxon>Spermatophyta</taxon>
        <taxon>Magnoliopsida</taxon>
        <taxon>eudicotyledons</taxon>
        <taxon>Gunneridae</taxon>
        <taxon>Pentapetalae</taxon>
        <taxon>rosids</taxon>
        <taxon>malvids</taxon>
        <taxon>Brassicales</taxon>
        <taxon>Brassicaceae</taxon>
        <taxon>Camelineae</taxon>
        <taxon>Arabidopsis</taxon>
    </lineage>
</organism>
<evidence type="ECO:0000250" key="1"/>
<evidence type="ECO:0000250" key="2">
    <source>
        <dbReference type="UniProtKB" id="P24021"/>
    </source>
</evidence>
<evidence type="ECO:0000250" key="3">
    <source>
        <dbReference type="UniProtKB" id="P24289"/>
    </source>
</evidence>
<evidence type="ECO:0000250" key="4">
    <source>
        <dbReference type="UniProtKB" id="Q9C9G4"/>
    </source>
</evidence>
<evidence type="ECO:0000255" key="5"/>
<evidence type="ECO:0000255" key="6">
    <source>
        <dbReference type="PROSITE-ProRule" id="PRU00498"/>
    </source>
</evidence>
<evidence type="ECO:0000269" key="7">
    <source>
    </source>
</evidence>
<evidence type="ECO:0000269" key="8">
    <source>
    </source>
</evidence>
<evidence type="ECO:0000269" key="9">
    <source>
    </source>
</evidence>
<evidence type="ECO:0000269" key="10">
    <source>
    </source>
</evidence>
<evidence type="ECO:0000269" key="11">
    <source>
    </source>
</evidence>
<evidence type="ECO:0000269" key="12">
    <source>
    </source>
</evidence>
<evidence type="ECO:0000303" key="13">
    <source>
    </source>
</evidence>
<evidence type="ECO:0000303" key="14">
    <source>
    </source>
</evidence>
<evidence type="ECO:0000305" key="15"/>
<evidence type="ECO:0000312" key="16">
    <source>
        <dbReference type="Araport" id="AT1G11190"/>
    </source>
</evidence>
<evidence type="ECO:0000312" key="17">
    <source>
        <dbReference type="EMBL" id="AAD49996.1"/>
    </source>
</evidence>
<name>ENDO1_ARATH</name>
<protein>
    <recommendedName>
        <fullName evidence="14">Endonuclease 1</fullName>
        <shortName evidence="14">AtENDO1</shortName>
        <ecNumber evidence="12">3.1.30.1</ecNumber>
    </recommendedName>
    <alternativeName>
        <fullName evidence="13">Bifunctional nuclease I</fullName>
        <shortName evidence="13">AtBFN1</shortName>
    </alternativeName>
    <alternativeName>
        <fullName evidence="14">Deoxyribonuclease ENDO1</fullName>
    </alternativeName>
    <alternativeName>
        <fullName evidence="14">Single-stranded-nucleate endonuclease ENDO1</fullName>
    </alternativeName>
</protein>
<feature type="signal peptide" evidence="5">
    <location>
        <begin position="1"/>
        <end position="28"/>
    </location>
</feature>
<feature type="chain" id="PRO_0000417619" description="Endonuclease 1">
    <location>
        <begin position="29"/>
        <end position="286"/>
    </location>
</feature>
<feature type="propeptide" id="PRO_0000445540" description="Removed in mature form" evidence="12">
    <location>
        <begin position="287"/>
        <end position="305"/>
    </location>
</feature>
<feature type="region of interest" description="Substrate binding" evidence="4">
    <location>
        <begin position="150"/>
        <end position="199"/>
    </location>
</feature>
<feature type="binding site" evidence="4">
    <location>
        <begin position="29"/>
        <end position="34"/>
    </location>
    <ligand>
        <name>substrate</name>
    </ligand>
</feature>
<feature type="binding site" evidence="4">
    <location>
        <position position="29"/>
    </location>
    <ligand>
        <name>a divalent metal cation</name>
        <dbReference type="ChEBI" id="CHEBI:60240"/>
        <label>3</label>
    </ligand>
</feature>
<feature type="binding site" evidence="4">
    <location>
        <position position="34"/>
    </location>
    <ligand>
        <name>a divalent metal cation</name>
        <dbReference type="ChEBI" id="CHEBI:60240"/>
        <label>3</label>
    </ligand>
</feature>
<feature type="binding site" evidence="4">
    <location>
        <begin position="73"/>
        <end position="79"/>
    </location>
    <ligand>
        <name>substrate</name>
    </ligand>
</feature>
<feature type="binding site" evidence="4">
    <location>
        <position position="73"/>
    </location>
    <ligand>
        <name>a divalent metal cation</name>
        <dbReference type="ChEBI" id="CHEBI:60240"/>
        <label>1</label>
    </ligand>
</feature>
<feature type="binding site" evidence="3">
    <location>
        <begin position="88"/>
        <end position="91"/>
    </location>
    <ligand>
        <name>substrate</name>
    </ligand>
</feature>
<feature type="binding site" evidence="4">
    <location>
        <position position="88"/>
    </location>
    <ligand>
        <name>a divalent metal cation</name>
        <dbReference type="ChEBI" id="CHEBI:60240"/>
        <label>1</label>
    </ligand>
</feature>
<feature type="binding site" evidence="3">
    <location>
        <begin position="98"/>
        <end position="103"/>
    </location>
    <ligand>
        <name>substrate</name>
    </ligand>
</feature>
<feature type="binding site" evidence="4">
    <location>
        <position position="122"/>
    </location>
    <ligand>
        <name>substrate</name>
    </ligand>
</feature>
<feature type="binding site" evidence="4">
    <location>
        <position position="139"/>
    </location>
    <ligand>
        <name>substrate</name>
    </ligand>
</feature>
<feature type="binding site" evidence="4">
    <location>
        <position position="150"/>
    </location>
    <ligand>
        <name>a divalent metal cation</name>
        <dbReference type="ChEBI" id="CHEBI:60240"/>
        <label>1</label>
    </ligand>
</feature>
<feature type="binding site" evidence="4">
    <location>
        <position position="154"/>
    </location>
    <ligand>
        <name>a divalent metal cation</name>
        <dbReference type="ChEBI" id="CHEBI:60240"/>
        <label>1</label>
    </ligand>
</feature>
<feature type="binding site" evidence="4">
    <location>
        <position position="154"/>
    </location>
    <ligand>
        <name>a divalent metal cation</name>
        <dbReference type="ChEBI" id="CHEBI:60240"/>
        <label>3</label>
    </ligand>
</feature>
<feature type="binding site" evidence="4">
    <location>
        <position position="160"/>
    </location>
    <ligand>
        <name>a divalent metal cation</name>
        <dbReference type="ChEBI" id="CHEBI:60240"/>
        <label>2</label>
    </ligand>
</feature>
<feature type="binding site" evidence="4">
    <location>
        <position position="184"/>
    </location>
    <ligand>
        <name>a divalent metal cation</name>
        <dbReference type="ChEBI" id="CHEBI:60240"/>
        <label>2</label>
    </ligand>
</feature>
<feature type="binding site" evidence="4">
    <location>
        <position position="188"/>
    </location>
    <ligand>
        <name>a divalent metal cation</name>
        <dbReference type="ChEBI" id="CHEBI:60240"/>
        <label>2</label>
    </ligand>
</feature>
<feature type="site" description="Important for catalytic activity" evidence="2">
    <location>
        <position position="73"/>
    </location>
</feature>
<feature type="site" description="Important for catalytic activity" evidence="3">
    <location>
        <position position="76"/>
    </location>
</feature>
<feature type="glycosylation site" description="N-linked (GlcNAc...) asparagine" evidence="6">
    <location>
        <position position="122"/>
    </location>
</feature>
<feature type="glycosylation site" description="N-linked (GlcNAc...) asparagine" evidence="6">
    <location>
        <position position="140"/>
    </location>
</feature>
<feature type="glycosylation site" description="N-linked (GlcNAc...) asparagine" evidence="6">
    <location>
        <position position="214"/>
    </location>
</feature>
<feature type="disulfide bond" evidence="4">
    <location>
        <begin position="38"/>
        <end position="69"/>
    </location>
</feature>
<feature type="disulfide bond" evidence="4">
    <location>
        <begin position="97"/>
        <end position="249"/>
    </location>
</feature>
<feature type="disulfide bond" evidence="4">
    <location>
        <begin position="105"/>
        <end position="115"/>
    </location>
</feature>
<feature type="disulfide bond" evidence="4">
    <location>
        <begin position="230"/>
        <end position="236"/>
    </location>
</feature>
<feature type="mutagenesis site" description="Loss of activity." evidence="12">
    <location>
        <begin position="287"/>
        <end position="305"/>
    </location>
</feature>
<feature type="sequence conflict" description="In Ref. 1; AAD00693." evidence="15" ref="1">
    <original>V</original>
    <variation>D</variation>
    <location>
        <position position="292"/>
    </location>
</feature>